<feature type="signal peptide" evidence="2">
    <location>
        <begin position="1"/>
        <end position="32"/>
    </location>
</feature>
<feature type="chain" id="PRO_0000239577" description="Envelope glycoprotein">
    <location>
        <begin position="33"/>
        <end position="636"/>
    </location>
</feature>
<feature type="chain" id="PRO_0000040739" description="Surface protein" evidence="1">
    <location>
        <begin position="33"/>
        <end position="440"/>
    </location>
</feature>
<feature type="chain" id="PRO_0000040740" description="Transmembrane protein" evidence="1">
    <location>
        <begin position="441"/>
        <end position="620"/>
    </location>
</feature>
<feature type="peptide" id="PRO_0000040741" description="R-peptide" evidence="1">
    <location>
        <begin position="621"/>
        <end position="636"/>
    </location>
</feature>
<feature type="topological domain" description="Extracellular" evidence="2">
    <location>
        <begin position="33"/>
        <end position="581"/>
    </location>
</feature>
<feature type="transmembrane region" description="Helical" evidence="2">
    <location>
        <begin position="582"/>
        <end position="602"/>
    </location>
</feature>
<feature type="topological domain" description="Cytoplasmic" evidence="2">
    <location>
        <begin position="603"/>
        <end position="636"/>
    </location>
</feature>
<feature type="region of interest" description="Receptor-binding domain (RBD)" evidence="2">
    <location>
        <begin position="32"/>
        <end position="233"/>
    </location>
</feature>
<feature type="region of interest" description="Disordered" evidence="3">
    <location>
        <begin position="254"/>
        <end position="282"/>
    </location>
</feature>
<feature type="region of interest" description="Fusion peptide" evidence="1">
    <location>
        <begin position="443"/>
        <end position="463"/>
    </location>
</feature>
<feature type="region of interest" description="Immunosuppression" evidence="1">
    <location>
        <begin position="509"/>
        <end position="525"/>
    </location>
</feature>
<feature type="coiled-coil region" evidence="2">
    <location>
        <begin position="472"/>
        <end position="508"/>
    </location>
</feature>
<feature type="short sequence motif" description="CXXC">
    <location>
        <begin position="307"/>
        <end position="310"/>
    </location>
</feature>
<feature type="short sequence motif" description="CX6CC">
    <location>
        <begin position="526"/>
        <end position="534"/>
    </location>
</feature>
<feature type="short sequence motif" description="YXXL motif; contains endocytosis signal" evidence="1">
    <location>
        <begin position="626"/>
        <end position="629"/>
    </location>
</feature>
<feature type="compositionally biased region" description="Pro residues" evidence="3">
    <location>
        <begin position="255"/>
        <end position="264"/>
    </location>
</feature>
<feature type="site" description="Cleavage; by host" evidence="1">
    <location>
        <begin position="440"/>
        <end position="441"/>
    </location>
</feature>
<feature type="site" description="Cleavage; by viral protease p14" evidence="1">
    <location>
        <begin position="620"/>
        <end position="621"/>
    </location>
</feature>
<feature type="lipid moiety-binding region" description="S-palmitoyl cysteine; by host" evidence="1">
    <location>
        <position position="601"/>
    </location>
</feature>
<feature type="glycosylation site" description="N-linked (GlcNAc...) asparagine; by host" evidence="1">
    <location>
        <position position="43"/>
    </location>
</feature>
<feature type="glycosylation site" description="N-linked (GlcNAc...) asparagine; by host" evidence="2">
    <location>
        <position position="58"/>
    </location>
</feature>
<feature type="glycosylation site" description="N-linked (GlcNAc...) asparagine; by host" evidence="1">
    <location>
        <position position="297"/>
    </location>
</feature>
<feature type="glycosylation site" description="N-linked (GlcNAc...) asparagine; by host" evidence="2">
    <location>
        <position position="329"/>
    </location>
</feature>
<feature type="glycosylation site" description="N-linked (GlcNAc...) asparagine; by host" evidence="2">
    <location>
        <position position="336"/>
    </location>
</feature>
<feature type="glycosylation site" description="N-linked (GlcNAc...) asparagine; by host" evidence="2">
    <location>
        <position position="369"/>
    </location>
</feature>
<feature type="glycosylation site" description="N-linked (GlcNAc...) asparagine; by host" evidence="2">
    <location>
        <position position="405"/>
    </location>
</feature>
<feature type="disulfide bond" evidence="1">
    <location>
        <begin position="109"/>
        <end position="126"/>
    </location>
</feature>
<feature type="disulfide bond" evidence="1">
    <location>
        <begin position="118"/>
        <end position="131"/>
    </location>
</feature>
<feature type="disulfide bond" description="Interchain (between SU and TM chains, or C-310 with C-534); in linked form" evidence="1">
    <location>
        <begin position="307"/>
        <end position="534"/>
    </location>
</feature>
<feature type="disulfide bond" evidence="1">
    <location>
        <begin position="307"/>
        <end position="310"/>
    </location>
</feature>
<feature type="disulfide bond" evidence="1">
    <location>
        <begin position="337"/>
        <end position="391"/>
    </location>
</feature>
<feature type="disulfide bond" evidence="1">
    <location>
        <begin position="356"/>
        <end position="368"/>
    </location>
</feature>
<feature type="disulfide bond" evidence="1">
    <location>
        <begin position="398"/>
        <end position="411"/>
    </location>
</feature>
<feature type="disulfide bond" evidence="1">
    <location>
        <begin position="526"/>
        <end position="533"/>
    </location>
</feature>
<sequence>MEGPAFSKPLKDKINPWGPLIILGILIRAGVSVQHDSPHQVFNVTWRVTNLMTGQTANATSLLGTMTDAFPKLYFDLCDLIGDDWDETGLGCRTPGGRKRARTFDFYVCPGHTVPTGCGGPREGYCGKWGCETTGQAYWKPSSSWDLISLKRGNTPRNQGPCYDSSVVSSGIQGATPGGRCNPLVLEFTDAGKKASWDGPKVWGLRLYRSTGIDPVTRFSLTRQVLNIGPRLPIGPNPVITGQLPPSRPVQIRLPRPPQPPPPGAASIVPETAPPSQQPGTGDRLLNLVDGAYQALNLTSPDKTQECWLCLVAGPPYYEGVAVLGTYSNHTSAPANCSVASQHKLTLSEVTGQGLCVGAVPKTHQALCNTTQKTSDGSYYLAAPAGTIWACNTGLTPCLSTTVLNLTTDYCVLVELWPKVTYHSPDYVYTQFEPGARFRREPVSLTLALLLGGLTMGGIAAGVGTGTTALVATQQFQQLQAAVHNDLKEVEKSITNLEKSLTSLSEVALQNRRGLDLLFLKEGGLCAALKEECCFYADHTGLVRDSMAKLRERLNQRQKLFESGQGWFEGLFNRSPWFTTLISTIMGPLIVLLLILLFGPCILNRLVQFVKDRISVVQALVLTQQYHQLKPIEYEP</sequence>
<organismHost>
    <name type="scientific">Mus musculus</name>
    <name type="common">Mouse</name>
    <dbReference type="NCBI Taxonomy" id="10090"/>
</organismHost>
<keyword id="KW-0165">Cleavage on pair of basic residues</keyword>
<keyword id="KW-0175">Coiled coil</keyword>
<keyword id="KW-1015">Disulfide bond</keyword>
<keyword id="KW-1169">Fusion of virus membrane with host cell membrane</keyword>
<keyword id="KW-1168">Fusion of virus membrane with host membrane</keyword>
<keyword id="KW-0325">Glycoprotein</keyword>
<keyword id="KW-1032">Host cell membrane</keyword>
<keyword id="KW-1043">Host membrane</keyword>
<keyword id="KW-0945">Host-virus interaction</keyword>
<keyword id="KW-0449">Lipoprotein</keyword>
<keyword id="KW-0472">Membrane</keyword>
<keyword id="KW-0564">Palmitate</keyword>
<keyword id="KW-0732">Signal</keyword>
<keyword id="KW-0812">Transmembrane</keyword>
<keyword id="KW-1133">Transmembrane helix</keyword>
<keyword id="KW-1161">Viral attachment to host cell</keyword>
<keyword id="KW-0261">Viral envelope protein</keyword>
<keyword id="KW-1162">Viral penetration into host cytoplasm</keyword>
<keyword id="KW-0946">Virion</keyword>
<keyword id="KW-1160">Virus entry into host cell</keyword>
<name>ENV_MCFF</name>
<comment type="function">
    <text evidence="1">The surface protein (SU) attaches the virus to the host cell by binding to its receptor. This interaction triggers the refolding of the transmembrane protein (TM) and is thought to activate its fusogenic potential by unmasking its fusion peptide. Fusion occurs at the host cell plasma membrane (By similarity).</text>
</comment>
<comment type="function">
    <text evidence="1">The transmembrane protein (TM) acts as a class I viral fusion protein. Under the current model, the protein has at least 3 conformational states: pre-fusion native state, pre-hairpin intermediate state, and post-fusion hairpin state. During viral and target cell membrane fusion, the coiled coil regions (heptad repeats) assume a trimer-of-hairpins structure, positioning the fusion peptide in close proximity to the C-terminal region of the ectodomain. The formation of this structure appears to drive apposition and subsequent fusion of viral and target cell membranes. Membranes fusion leads to delivery of the nucleocapsid into the cytoplasm (By similarity).</text>
</comment>
<comment type="subunit">
    <text evidence="1">The mature envelope protein (Env) consists of a trimer of SU-TM heterodimers attached by a labile interchain disulfide bond.</text>
</comment>
<comment type="subcellular location">
    <molecule>Transmembrane protein</molecule>
    <subcellularLocation>
        <location evidence="1">Virion membrane</location>
        <topology evidence="1">Single-pass type I membrane protein</topology>
    </subcellularLocation>
    <subcellularLocation>
        <location evidence="1">Host cell membrane</location>
        <topology evidence="1">Single-pass type I membrane protein</topology>
    </subcellularLocation>
</comment>
<comment type="subcellular location">
    <molecule>Surface protein</molecule>
    <subcellularLocation>
        <location>Virion membrane</location>
        <topology>Peripheral membrane protein</topology>
    </subcellularLocation>
    <subcellularLocation>
        <location evidence="1">Host cell membrane</location>
        <topology evidence="1">Peripheral membrane protein</topology>
    </subcellularLocation>
    <text evidence="1">The surface protein is not anchored to the viral envelope, but associates with the virion surface through its binding to TM. Both proteins are thought to be concentrated at the site of budding and incorporated into the virions possibly by contacts between the cytoplasmic tail of Env and the N-terminus of Gag (By similarity).</text>
</comment>
<comment type="subcellular location">
    <molecule>R-peptide</molecule>
    <subcellularLocation>
        <location evidence="1">Host cell membrane</location>
        <topology evidence="1">Peripheral membrane protein</topology>
    </subcellularLocation>
    <text evidence="1">The R-peptide is membrane-associated through its palmitate.</text>
</comment>
<comment type="domain">
    <text evidence="1">The 17 amino acids long immunosuppressive region is present in many retroviral envelope proteins. Synthetic peptides derived from this relatively conserved sequence inhibit immune function in vitro and in vivo (By similarity).</text>
</comment>
<comment type="domain">
    <text>The YXXL motif is involved in determining the exact site of viral release at the surface of infected mononuclear cells and promotes endocytosis.</text>
</comment>
<comment type="PTM">
    <text evidence="1">Specific enzymatic cleavages in vivo yield mature proteins. Envelope glycoproteins are synthesized as an inactive precursor that is N-glycosylated and processed likely by host cell furin or by a furin-like protease in the Golgi to yield the mature SU and TM proteins. The cleavage site between SU and TM requires the minimal sequence [KR]-X-[KR]-R. The R-peptide is released from the C-terminus of the cytoplasmic tail of the TM protein upon particle formation as a result of proteolytic cleavage by the viral protease. Cleavage of this peptide is required for TM to become fusogenic (By similarity).</text>
</comment>
<comment type="PTM">
    <text evidence="1">The CXXC motif is highly conserved across a broad range of retroviral envelope proteins. It is thought to participate in the formation of a labile disulfide bond possibly with the CX6CC motif present in the transmembrane protein. Isomerization of the intersubunit disulfide bond to an SU intrachain disulfide bond is thought to occur upon receptor recognition in order to allow membrane fusion (By similarity).</text>
</comment>
<comment type="PTM">
    <text evidence="1">The transmembrane protein is palmitoylated.</text>
</comment>
<comment type="PTM">
    <text evidence="1">The R-peptide is palmitoylated.</text>
</comment>
<evidence type="ECO:0000250" key="1"/>
<evidence type="ECO:0000255" key="2"/>
<evidence type="ECO:0000256" key="3">
    <source>
        <dbReference type="SAM" id="MobiDB-lite"/>
    </source>
</evidence>
<accession>P15073</accession>
<dbReference type="EMBL" id="M23029">
    <property type="status" value="NOT_ANNOTATED_CDS"/>
    <property type="molecule type" value="Genomic_RNA"/>
</dbReference>
<dbReference type="SMR" id="P15073"/>
<dbReference type="GlyCosmos" id="P15073">
    <property type="glycosylation" value="7 sites, No reported glycans"/>
</dbReference>
<dbReference type="SwissPalm" id="P15073"/>
<dbReference type="GO" id="GO:0020002">
    <property type="term" value="C:host cell plasma membrane"/>
    <property type="evidence" value="ECO:0007669"/>
    <property type="project" value="UniProtKB-SubCell"/>
</dbReference>
<dbReference type="GO" id="GO:0016020">
    <property type="term" value="C:membrane"/>
    <property type="evidence" value="ECO:0007669"/>
    <property type="project" value="UniProtKB-KW"/>
</dbReference>
<dbReference type="GO" id="GO:0019031">
    <property type="term" value="C:viral envelope"/>
    <property type="evidence" value="ECO:0007669"/>
    <property type="project" value="UniProtKB-KW"/>
</dbReference>
<dbReference type="GO" id="GO:0055036">
    <property type="term" value="C:virion membrane"/>
    <property type="evidence" value="ECO:0007669"/>
    <property type="project" value="UniProtKB-SubCell"/>
</dbReference>
<dbReference type="GO" id="GO:0019064">
    <property type="term" value="P:fusion of virus membrane with host plasma membrane"/>
    <property type="evidence" value="ECO:0007669"/>
    <property type="project" value="UniProtKB-KW"/>
</dbReference>
<dbReference type="GO" id="GO:0046718">
    <property type="term" value="P:symbiont entry into host cell"/>
    <property type="evidence" value="ECO:0007669"/>
    <property type="project" value="UniProtKB-KW"/>
</dbReference>
<dbReference type="GO" id="GO:0019062">
    <property type="term" value="P:virion attachment to host cell"/>
    <property type="evidence" value="ECO:0007669"/>
    <property type="project" value="UniProtKB-KW"/>
</dbReference>
<dbReference type="CDD" id="cd09851">
    <property type="entry name" value="HTLV-1-like_HR1-HR2"/>
    <property type="match status" value="1"/>
</dbReference>
<dbReference type="FunFam" id="1.10.287.210:FF:000005">
    <property type="entry name" value="Envelope glycoprotein"/>
    <property type="match status" value="1"/>
</dbReference>
<dbReference type="Gene3D" id="1.10.287.210">
    <property type="match status" value="1"/>
</dbReference>
<dbReference type="Gene3D" id="3.90.310.10">
    <property type="entry name" value="ENV polyprotein, receptor-binding domain"/>
    <property type="match status" value="1"/>
</dbReference>
<dbReference type="InterPro" id="IPR008981">
    <property type="entry name" value="FMuLV_rcpt-bd"/>
</dbReference>
<dbReference type="InterPro" id="IPR018154">
    <property type="entry name" value="TLV/ENV_coat_polyprotein"/>
</dbReference>
<dbReference type="PANTHER" id="PTHR10424:SF72">
    <property type="entry name" value="BC035947 PROTEIN-RELATED"/>
    <property type="match status" value="1"/>
</dbReference>
<dbReference type="PANTHER" id="PTHR10424">
    <property type="entry name" value="VIRAL ENVELOPE PROTEIN"/>
    <property type="match status" value="1"/>
</dbReference>
<dbReference type="Pfam" id="PF00429">
    <property type="entry name" value="TLV_coat"/>
    <property type="match status" value="2"/>
</dbReference>
<dbReference type="SUPFAM" id="SSF49830">
    <property type="entry name" value="ENV polyprotein, receptor-binding domain"/>
    <property type="match status" value="1"/>
</dbReference>
<dbReference type="SUPFAM" id="SSF58069">
    <property type="entry name" value="Virus ectodomain"/>
    <property type="match status" value="1"/>
</dbReference>
<reference key="1">
    <citation type="journal article" date="1989" name="Virology">
        <title>Biologic and molecular genetic characteristics of a unique MCF virus that is highly leukemogenic in ecotropic virus-negative mice.</title>
        <authorList>
            <person name="Chattopadhyay S.K."/>
            <person name="Baroudy B.M."/>
            <person name="Holmes K.L."/>
            <person name="Fredrickson T.N."/>
            <person name="Lander M.R."/>
            <person name="Morse H.C. III"/>
            <person name="Hartley J.W."/>
        </authorList>
    </citation>
    <scope>NUCLEOTIDE SEQUENCE [GENOMIC RNA]</scope>
</reference>
<gene>
    <name type="primary">env</name>
</gene>
<proteinExistence type="inferred from homology"/>
<protein>
    <recommendedName>
        <fullName>Envelope glycoprotein</fullName>
    </recommendedName>
    <alternativeName>
        <fullName>Env polyprotein</fullName>
    </alternativeName>
    <component>
        <recommendedName>
            <fullName>Surface protein</fullName>
            <shortName>SU</shortName>
        </recommendedName>
        <alternativeName>
            <fullName>Glycoprotein 70</fullName>
            <shortName>gp70</shortName>
        </alternativeName>
    </component>
    <component>
        <recommendedName>
            <fullName>Transmembrane protein</fullName>
            <shortName>TM</shortName>
        </recommendedName>
        <alternativeName>
            <fullName>Envelope protein p15E</fullName>
        </alternativeName>
    </component>
    <component>
        <recommendedName>
            <fullName>R-peptide</fullName>
        </recommendedName>
        <alternativeName>
            <fullName>p2E</fullName>
        </alternativeName>
    </component>
</protein>
<organism>
    <name type="scientific">Mink cell focus-forming murine leukemia virus</name>
    <dbReference type="NCBI Taxonomy" id="11935"/>
    <lineage>
        <taxon>Viruses</taxon>
        <taxon>Riboviria</taxon>
        <taxon>Pararnavirae</taxon>
        <taxon>Artverviricota</taxon>
        <taxon>Revtraviricetes</taxon>
        <taxon>Ortervirales</taxon>
        <taxon>Retroviridae</taxon>
        <taxon>Orthoretrovirinae</taxon>
        <taxon>Gammaretrovirus</taxon>
        <taxon>Murine leukemia virus</taxon>
    </lineage>
</organism>